<accession>Q58465</accession>
<protein>
    <recommendedName>
        <fullName>Uncharacterized protein MJ1065</fullName>
    </recommendedName>
</protein>
<organism>
    <name type="scientific">Methanocaldococcus jannaschii (strain ATCC 43067 / DSM 2661 / JAL-1 / JCM 10045 / NBRC 100440)</name>
    <name type="common">Methanococcus jannaschii</name>
    <dbReference type="NCBI Taxonomy" id="243232"/>
    <lineage>
        <taxon>Archaea</taxon>
        <taxon>Methanobacteriati</taxon>
        <taxon>Methanobacteriota</taxon>
        <taxon>Methanomada group</taxon>
        <taxon>Methanococci</taxon>
        <taxon>Methanococcales</taxon>
        <taxon>Methanocaldococcaceae</taxon>
        <taxon>Methanocaldococcus</taxon>
    </lineage>
</organism>
<reference key="1">
    <citation type="journal article" date="1996" name="Science">
        <title>Complete genome sequence of the methanogenic archaeon, Methanococcus jannaschii.</title>
        <authorList>
            <person name="Bult C.J."/>
            <person name="White O."/>
            <person name="Olsen G.J."/>
            <person name="Zhou L."/>
            <person name="Fleischmann R.D."/>
            <person name="Sutton G.G."/>
            <person name="Blake J.A."/>
            <person name="FitzGerald L.M."/>
            <person name="Clayton R.A."/>
            <person name="Gocayne J.D."/>
            <person name="Kerlavage A.R."/>
            <person name="Dougherty B.A."/>
            <person name="Tomb J.-F."/>
            <person name="Adams M.D."/>
            <person name="Reich C.I."/>
            <person name="Overbeek R."/>
            <person name="Kirkness E.F."/>
            <person name="Weinstock K.G."/>
            <person name="Merrick J.M."/>
            <person name="Glodek A."/>
            <person name="Scott J.L."/>
            <person name="Geoghagen N.S.M."/>
            <person name="Weidman J.F."/>
            <person name="Fuhrmann J.L."/>
            <person name="Nguyen D."/>
            <person name="Utterback T.R."/>
            <person name="Kelley J.M."/>
            <person name="Peterson J.D."/>
            <person name="Sadow P.W."/>
            <person name="Hanna M.C."/>
            <person name="Cotton M.D."/>
            <person name="Roberts K.M."/>
            <person name="Hurst M.A."/>
            <person name="Kaine B.P."/>
            <person name="Borodovsky M."/>
            <person name="Klenk H.-P."/>
            <person name="Fraser C.M."/>
            <person name="Smith H.O."/>
            <person name="Woese C.R."/>
            <person name="Venter J.C."/>
        </authorList>
    </citation>
    <scope>NUCLEOTIDE SEQUENCE [LARGE SCALE GENOMIC DNA]</scope>
    <source>
        <strain>ATCC 43067 / DSM 2661 / JAL-1 / JCM 10045 / NBRC 100440</strain>
    </source>
</reference>
<comment type="similarity">
    <text evidence="2">To B.subtilis SpsE.</text>
</comment>
<name>Y1065_METJA</name>
<sequence length="337" mass="37977">MEKIKIGDRYVGKGEPTFIIAEGGLNHNGDIDIGKELVKEAKKCGADAIKFQSYHTEDFISKKSEYYELFKSLELSEEEFYELKEYAEKIGIMFISTPLDLKYVDILNKMNVPAFKIASGDLTFYPLLEKVAKTGKPVILSTGMSDIGEIWEAVKVLENNGCRDIILLHCISSYPTPYEDVNLNAIKTLKSIFNIPVGYSDHTLGILAPVVSVALGADVIEKHFTLDKNMEGPDHALSADPEEFKEMVNNIRLVEKMLGSGEKIPMPSERDVIVEARRSIVAKRNIKKGEYLSVDNISFKRPGRGIETKYLSIILNRKIKNDKEEDDIIYWDDLLGD</sequence>
<proteinExistence type="predicted"/>
<keyword id="KW-1185">Reference proteome</keyword>
<feature type="chain" id="PRO_0000107156" description="Uncharacterized protein MJ1065">
    <location>
        <begin position="1"/>
        <end position="337"/>
    </location>
</feature>
<feature type="domain" description="AFP-like" evidence="1">
    <location>
        <begin position="279"/>
        <end position="337"/>
    </location>
</feature>
<dbReference type="EMBL" id="L77117">
    <property type="protein sequence ID" value="AAB99068.1"/>
    <property type="molecule type" value="Genomic_DNA"/>
</dbReference>
<dbReference type="PIR" id="H64432">
    <property type="entry name" value="H64432"/>
</dbReference>
<dbReference type="RefSeq" id="WP_010870578.1">
    <property type="nucleotide sequence ID" value="NC_000909.1"/>
</dbReference>
<dbReference type="SMR" id="Q58465"/>
<dbReference type="FunCoup" id="Q58465">
    <property type="interactions" value="104"/>
</dbReference>
<dbReference type="STRING" id="243232.MJ_1065"/>
<dbReference type="PaxDb" id="243232-MJ_1065"/>
<dbReference type="EnsemblBacteria" id="AAB99068">
    <property type="protein sequence ID" value="AAB99068"/>
    <property type="gene ID" value="MJ_1065"/>
</dbReference>
<dbReference type="GeneID" id="1451962"/>
<dbReference type="KEGG" id="mja:MJ_1065"/>
<dbReference type="eggNOG" id="arCOG01050">
    <property type="taxonomic scope" value="Archaea"/>
</dbReference>
<dbReference type="HOGENOM" id="CLU_040465_0_0_2"/>
<dbReference type="InParanoid" id="Q58465"/>
<dbReference type="OrthoDB" id="71219at2157"/>
<dbReference type="PhylomeDB" id="Q58465"/>
<dbReference type="Proteomes" id="UP000000805">
    <property type="component" value="Chromosome"/>
</dbReference>
<dbReference type="GO" id="GO:0047444">
    <property type="term" value="F:N-acylneuraminate-9-phosphate synthase activity"/>
    <property type="evidence" value="ECO:0000318"/>
    <property type="project" value="GO_Central"/>
</dbReference>
<dbReference type="GO" id="GO:0016051">
    <property type="term" value="P:carbohydrate biosynthetic process"/>
    <property type="evidence" value="ECO:0007669"/>
    <property type="project" value="InterPro"/>
</dbReference>
<dbReference type="GO" id="GO:0070085">
    <property type="term" value="P:glycosylation"/>
    <property type="evidence" value="ECO:0000318"/>
    <property type="project" value="GO_Central"/>
</dbReference>
<dbReference type="CDD" id="cd11615">
    <property type="entry name" value="SAF_NeuB_like"/>
    <property type="match status" value="1"/>
</dbReference>
<dbReference type="Gene3D" id="3.20.20.70">
    <property type="entry name" value="Aldolase class I"/>
    <property type="match status" value="1"/>
</dbReference>
<dbReference type="Gene3D" id="3.90.1210.10">
    <property type="entry name" value="Antifreeze-like/N-acetylneuraminic acid synthase C-terminal domain"/>
    <property type="match status" value="1"/>
</dbReference>
<dbReference type="InterPro" id="IPR006190">
    <property type="entry name" value="AFP_Neu5c_C"/>
</dbReference>
<dbReference type="InterPro" id="IPR036732">
    <property type="entry name" value="AFP_Neu5c_C_sf"/>
</dbReference>
<dbReference type="InterPro" id="IPR013785">
    <property type="entry name" value="Aldolase_TIM"/>
</dbReference>
<dbReference type="InterPro" id="IPR013132">
    <property type="entry name" value="Neu5Ac_N"/>
</dbReference>
<dbReference type="InterPro" id="IPR051690">
    <property type="entry name" value="Nonulosonic_Acid_Synth"/>
</dbReference>
<dbReference type="InterPro" id="IPR013974">
    <property type="entry name" value="SAF"/>
</dbReference>
<dbReference type="PANTHER" id="PTHR42966">
    <property type="entry name" value="N-ACETYLNEURAMINATE SYNTHASE"/>
    <property type="match status" value="1"/>
</dbReference>
<dbReference type="PANTHER" id="PTHR42966:SF1">
    <property type="entry name" value="SIALIC ACID SYNTHASE"/>
    <property type="match status" value="1"/>
</dbReference>
<dbReference type="Pfam" id="PF03102">
    <property type="entry name" value="NeuB"/>
    <property type="match status" value="1"/>
</dbReference>
<dbReference type="Pfam" id="PF08666">
    <property type="entry name" value="SAF"/>
    <property type="match status" value="1"/>
</dbReference>
<dbReference type="SMART" id="SM00858">
    <property type="entry name" value="SAF"/>
    <property type="match status" value="1"/>
</dbReference>
<dbReference type="SUPFAM" id="SSF51269">
    <property type="entry name" value="AFP III-like domain"/>
    <property type="match status" value="1"/>
</dbReference>
<dbReference type="SUPFAM" id="SSF51569">
    <property type="entry name" value="Aldolase"/>
    <property type="match status" value="1"/>
</dbReference>
<dbReference type="PROSITE" id="PS50844">
    <property type="entry name" value="AFP_LIKE"/>
    <property type="match status" value="1"/>
</dbReference>
<evidence type="ECO:0000255" key="1">
    <source>
        <dbReference type="PROSITE-ProRule" id="PRU00021"/>
    </source>
</evidence>
<evidence type="ECO:0000305" key="2"/>
<gene>
    <name type="ordered locus">MJ1065</name>
</gene>